<keyword id="KW-0256">Endoplasmic reticulum</keyword>
<keyword id="KW-0472">Membrane</keyword>
<keyword id="KW-1185">Reference proteome</keyword>
<keyword id="KW-0812">Transmembrane</keyword>
<keyword id="KW-1133">Transmembrane helix</keyword>
<sequence>MGNPVVIKAKKDYDCVFEPEPMSWLRLQYYRYQVTAGTYLFTYKEAFVFNTVVFIIVFLTGWAAKSIIVKLLPSLWRLSTLIPSFFASFFMSLLGKDASSQ</sequence>
<accession>O42843</accession>
<comment type="subcellular location">
    <subcellularLocation>
        <location evidence="2">Endoplasmic reticulum membrane</location>
        <topology evidence="2">Multi-pass membrane protein</topology>
    </subcellularLocation>
</comment>
<dbReference type="EMBL" id="CU329670">
    <property type="protein sequence ID" value="CAA16979.1"/>
    <property type="molecule type" value="Genomic_DNA"/>
</dbReference>
<dbReference type="PIR" id="T38225">
    <property type="entry name" value="T38225"/>
</dbReference>
<dbReference type="BioGRID" id="278472">
    <property type="interactions" value="4"/>
</dbReference>
<dbReference type="STRING" id="284812.O42843"/>
<dbReference type="iPTMnet" id="O42843"/>
<dbReference type="PaxDb" id="4896-SPAC23A1.05.1"/>
<dbReference type="EnsemblFungi" id="SPAC23A1.05.1">
    <property type="protein sequence ID" value="SPAC23A1.05.1:pep"/>
    <property type="gene ID" value="SPAC23A1.05"/>
</dbReference>
<dbReference type="KEGG" id="spo:2541988"/>
<dbReference type="PomBase" id="SPAC23A1.05"/>
<dbReference type="VEuPathDB" id="FungiDB:SPAC23A1.05"/>
<dbReference type="HOGENOM" id="CLU_2387432_0_0_1"/>
<dbReference type="InParanoid" id="O42843"/>
<dbReference type="OMA" id="QYYRYQV"/>
<dbReference type="PRO" id="PR:O42843"/>
<dbReference type="Proteomes" id="UP000002485">
    <property type="component" value="Chromosome I"/>
</dbReference>
<dbReference type="GO" id="GO:0005737">
    <property type="term" value="C:cytoplasm"/>
    <property type="evidence" value="ECO:0007005"/>
    <property type="project" value="PomBase"/>
</dbReference>
<dbReference type="GO" id="GO:0005783">
    <property type="term" value="C:endoplasmic reticulum"/>
    <property type="evidence" value="ECO:0007005"/>
    <property type="project" value="PomBase"/>
</dbReference>
<dbReference type="GO" id="GO:0005789">
    <property type="term" value="C:endoplasmic reticulum membrane"/>
    <property type="evidence" value="ECO:0000305"/>
    <property type="project" value="PomBase"/>
</dbReference>
<dbReference type="GO" id="GO:0017059">
    <property type="term" value="C:serine palmitoyltransferase complex"/>
    <property type="evidence" value="ECO:0000250"/>
    <property type="project" value="PomBase"/>
</dbReference>
<dbReference type="GO" id="GO:0008047">
    <property type="term" value="F:enzyme activator activity"/>
    <property type="evidence" value="ECO:0000266"/>
    <property type="project" value="PomBase"/>
</dbReference>
<dbReference type="GO" id="GO:0030148">
    <property type="term" value="P:sphingolipid biosynthetic process"/>
    <property type="evidence" value="ECO:0000250"/>
    <property type="project" value="PomBase"/>
</dbReference>
<dbReference type="InterPro" id="IPR024512">
    <property type="entry name" value="Ser_palmitoyltrfase_ssu-like"/>
</dbReference>
<dbReference type="Pfam" id="PF11779">
    <property type="entry name" value="SPT_ssu-like"/>
    <property type="match status" value="1"/>
</dbReference>
<feature type="chain" id="PRO_0000304036" description="Uncharacterized membrane protein C23A1.05">
    <location>
        <begin position="1"/>
        <end position="101"/>
    </location>
</feature>
<feature type="transmembrane region" description="Helical" evidence="1">
    <location>
        <begin position="52"/>
        <end position="72"/>
    </location>
</feature>
<feature type="transmembrane region" description="Helical" evidence="1">
    <location>
        <begin position="75"/>
        <end position="95"/>
    </location>
</feature>
<protein>
    <recommendedName>
        <fullName>Uncharacterized membrane protein C23A1.05</fullName>
    </recommendedName>
</protein>
<name>YFH5_SCHPO</name>
<organism>
    <name type="scientific">Schizosaccharomyces pombe (strain 972 / ATCC 24843)</name>
    <name type="common">Fission yeast</name>
    <dbReference type="NCBI Taxonomy" id="284812"/>
    <lineage>
        <taxon>Eukaryota</taxon>
        <taxon>Fungi</taxon>
        <taxon>Dikarya</taxon>
        <taxon>Ascomycota</taxon>
        <taxon>Taphrinomycotina</taxon>
        <taxon>Schizosaccharomycetes</taxon>
        <taxon>Schizosaccharomycetales</taxon>
        <taxon>Schizosaccharomycetaceae</taxon>
        <taxon>Schizosaccharomyces</taxon>
    </lineage>
</organism>
<gene>
    <name type="ORF">SPAC23A1.05</name>
</gene>
<reference key="1">
    <citation type="journal article" date="2002" name="Nature">
        <title>The genome sequence of Schizosaccharomyces pombe.</title>
        <authorList>
            <person name="Wood V."/>
            <person name="Gwilliam R."/>
            <person name="Rajandream M.A."/>
            <person name="Lyne M.H."/>
            <person name="Lyne R."/>
            <person name="Stewart A."/>
            <person name="Sgouros J.G."/>
            <person name="Peat N."/>
            <person name="Hayles J."/>
            <person name="Baker S.G."/>
            <person name="Basham D."/>
            <person name="Bowman S."/>
            <person name="Brooks K."/>
            <person name="Brown D."/>
            <person name="Brown S."/>
            <person name="Chillingworth T."/>
            <person name="Churcher C.M."/>
            <person name="Collins M."/>
            <person name="Connor R."/>
            <person name="Cronin A."/>
            <person name="Davis P."/>
            <person name="Feltwell T."/>
            <person name="Fraser A."/>
            <person name="Gentles S."/>
            <person name="Goble A."/>
            <person name="Hamlin N."/>
            <person name="Harris D.E."/>
            <person name="Hidalgo J."/>
            <person name="Hodgson G."/>
            <person name="Holroyd S."/>
            <person name="Hornsby T."/>
            <person name="Howarth S."/>
            <person name="Huckle E.J."/>
            <person name="Hunt S."/>
            <person name="Jagels K."/>
            <person name="James K.D."/>
            <person name="Jones L."/>
            <person name="Jones M."/>
            <person name="Leather S."/>
            <person name="McDonald S."/>
            <person name="McLean J."/>
            <person name="Mooney P."/>
            <person name="Moule S."/>
            <person name="Mungall K.L."/>
            <person name="Murphy L.D."/>
            <person name="Niblett D."/>
            <person name="Odell C."/>
            <person name="Oliver K."/>
            <person name="O'Neil S."/>
            <person name="Pearson D."/>
            <person name="Quail M.A."/>
            <person name="Rabbinowitsch E."/>
            <person name="Rutherford K.M."/>
            <person name="Rutter S."/>
            <person name="Saunders D."/>
            <person name="Seeger K."/>
            <person name="Sharp S."/>
            <person name="Skelton J."/>
            <person name="Simmonds M.N."/>
            <person name="Squares R."/>
            <person name="Squares S."/>
            <person name="Stevens K."/>
            <person name="Taylor K."/>
            <person name="Taylor R.G."/>
            <person name="Tivey A."/>
            <person name="Walsh S.V."/>
            <person name="Warren T."/>
            <person name="Whitehead S."/>
            <person name="Woodward J.R."/>
            <person name="Volckaert G."/>
            <person name="Aert R."/>
            <person name="Robben J."/>
            <person name="Grymonprez B."/>
            <person name="Weltjens I."/>
            <person name="Vanstreels E."/>
            <person name="Rieger M."/>
            <person name="Schaefer M."/>
            <person name="Mueller-Auer S."/>
            <person name="Gabel C."/>
            <person name="Fuchs M."/>
            <person name="Duesterhoeft A."/>
            <person name="Fritzc C."/>
            <person name="Holzer E."/>
            <person name="Moestl D."/>
            <person name="Hilbert H."/>
            <person name="Borzym K."/>
            <person name="Langer I."/>
            <person name="Beck A."/>
            <person name="Lehrach H."/>
            <person name="Reinhardt R."/>
            <person name="Pohl T.M."/>
            <person name="Eger P."/>
            <person name="Zimmermann W."/>
            <person name="Wedler H."/>
            <person name="Wambutt R."/>
            <person name="Purnelle B."/>
            <person name="Goffeau A."/>
            <person name="Cadieu E."/>
            <person name="Dreano S."/>
            <person name="Gloux S."/>
            <person name="Lelaure V."/>
            <person name="Mottier S."/>
            <person name="Galibert F."/>
            <person name="Aves S.J."/>
            <person name="Xiang Z."/>
            <person name="Hunt C."/>
            <person name="Moore K."/>
            <person name="Hurst S.M."/>
            <person name="Lucas M."/>
            <person name="Rochet M."/>
            <person name="Gaillardin C."/>
            <person name="Tallada V.A."/>
            <person name="Garzon A."/>
            <person name="Thode G."/>
            <person name="Daga R.R."/>
            <person name="Cruzado L."/>
            <person name="Jimenez J."/>
            <person name="Sanchez M."/>
            <person name="del Rey F."/>
            <person name="Benito J."/>
            <person name="Dominguez A."/>
            <person name="Revuelta J.L."/>
            <person name="Moreno S."/>
            <person name="Armstrong J."/>
            <person name="Forsburg S.L."/>
            <person name="Cerutti L."/>
            <person name="Lowe T."/>
            <person name="McCombie W.R."/>
            <person name="Paulsen I."/>
            <person name="Potashkin J."/>
            <person name="Shpakovski G.V."/>
            <person name="Ussery D."/>
            <person name="Barrell B.G."/>
            <person name="Nurse P."/>
        </authorList>
    </citation>
    <scope>NUCLEOTIDE SEQUENCE [LARGE SCALE GENOMIC DNA]</scope>
    <source>
        <strain>972 / ATCC 24843</strain>
    </source>
</reference>
<reference key="2">
    <citation type="journal article" date="2006" name="Nat. Biotechnol.">
        <title>ORFeome cloning and global analysis of protein localization in the fission yeast Schizosaccharomyces pombe.</title>
        <authorList>
            <person name="Matsuyama A."/>
            <person name="Arai R."/>
            <person name="Yashiroda Y."/>
            <person name="Shirai A."/>
            <person name="Kamata A."/>
            <person name="Sekido S."/>
            <person name="Kobayashi Y."/>
            <person name="Hashimoto A."/>
            <person name="Hamamoto M."/>
            <person name="Hiraoka Y."/>
            <person name="Horinouchi S."/>
            <person name="Yoshida M."/>
        </authorList>
    </citation>
    <scope>SUBCELLULAR LOCATION [LARGE SCALE ANALYSIS]</scope>
</reference>
<proteinExistence type="predicted"/>
<evidence type="ECO:0000255" key="1"/>
<evidence type="ECO:0000269" key="2">
    <source>
    </source>
</evidence>